<accession>P45106</accession>
<organism>
    <name type="scientific">Haemophilus influenzae (strain ATCC 51907 / DSM 11121 / KW20 / Rd)</name>
    <dbReference type="NCBI Taxonomy" id="71421"/>
    <lineage>
        <taxon>Bacteria</taxon>
        <taxon>Pseudomonadati</taxon>
        <taxon>Pseudomonadota</taxon>
        <taxon>Gammaproteobacteria</taxon>
        <taxon>Pasteurellales</taxon>
        <taxon>Pasteurellaceae</taxon>
        <taxon>Haemophilus</taxon>
    </lineage>
</organism>
<dbReference type="EC" id="2.1.1.298" evidence="1"/>
<dbReference type="EMBL" id="L42023">
    <property type="protein sequence ID" value="AAC22855.1"/>
    <property type="molecule type" value="Genomic_DNA"/>
</dbReference>
<dbReference type="PIR" id="F64189">
    <property type="entry name" value="F64189"/>
</dbReference>
<dbReference type="RefSeq" id="NP_439357.1">
    <property type="nucleotide sequence ID" value="NC_000907.1"/>
</dbReference>
<dbReference type="SMR" id="P45106"/>
<dbReference type="STRING" id="71421.HI_1201"/>
<dbReference type="EnsemblBacteria" id="AAC22855">
    <property type="protein sequence ID" value="AAC22855"/>
    <property type="gene ID" value="HI_1201"/>
</dbReference>
<dbReference type="KEGG" id="hin:HI_1201"/>
<dbReference type="PATRIC" id="fig|71421.8.peg.1253"/>
<dbReference type="eggNOG" id="COG2890">
    <property type="taxonomic scope" value="Bacteria"/>
</dbReference>
<dbReference type="HOGENOM" id="CLU_018398_5_1_6"/>
<dbReference type="OrthoDB" id="9800643at2"/>
<dbReference type="PhylomeDB" id="P45106"/>
<dbReference type="BioCyc" id="HINF71421:G1GJ1-1232-MONOMER"/>
<dbReference type="Proteomes" id="UP000000579">
    <property type="component" value="Chromosome"/>
</dbReference>
<dbReference type="GO" id="GO:0005829">
    <property type="term" value="C:cytosol"/>
    <property type="evidence" value="ECO:0000318"/>
    <property type="project" value="GO_Central"/>
</dbReference>
<dbReference type="GO" id="GO:0003676">
    <property type="term" value="F:nucleic acid binding"/>
    <property type="evidence" value="ECO:0007669"/>
    <property type="project" value="InterPro"/>
</dbReference>
<dbReference type="GO" id="GO:0036009">
    <property type="term" value="F:protein-glutamine N-methyltransferase activity"/>
    <property type="evidence" value="ECO:0000318"/>
    <property type="project" value="GO_Central"/>
</dbReference>
<dbReference type="GO" id="GO:0032259">
    <property type="term" value="P:methylation"/>
    <property type="evidence" value="ECO:0007669"/>
    <property type="project" value="UniProtKB-KW"/>
</dbReference>
<dbReference type="CDD" id="cd02440">
    <property type="entry name" value="AdoMet_MTases"/>
    <property type="match status" value="1"/>
</dbReference>
<dbReference type="FunFam" id="3.40.50.150:FF:000042">
    <property type="entry name" value="50S ribosomal protein L3 glutamine methyltransferase"/>
    <property type="match status" value="1"/>
</dbReference>
<dbReference type="Gene3D" id="1.10.8.10">
    <property type="entry name" value="DNA helicase RuvA subunit, C-terminal domain"/>
    <property type="match status" value="1"/>
</dbReference>
<dbReference type="Gene3D" id="3.40.50.150">
    <property type="entry name" value="Vaccinia Virus protein VP39"/>
    <property type="match status" value="1"/>
</dbReference>
<dbReference type="HAMAP" id="MF_02125">
    <property type="entry name" value="L3_methyltr_PrmB"/>
    <property type="match status" value="1"/>
</dbReference>
<dbReference type="InterPro" id="IPR002052">
    <property type="entry name" value="DNA_methylase_N6_adenine_CS"/>
</dbReference>
<dbReference type="InterPro" id="IPR004556">
    <property type="entry name" value="HemK-like"/>
</dbReference>
<dbReference type="InterPro" id="IPR017127">
    <property type="entry name" value="Ribosome_uL3_MTase"/>
</dbReference>
<dbReference type="InterPro" id="IPR029063">
    <property type="entry name" value="SAM-dependent_MTases_sf"/>
</dbReference>
<dbReference type="InterPro" id="IPR007848">
    <property type="entry name" value="Small_mtfrase_dom"/>
</dbReference>
<dbReference type="NCBIfam" id="TIGR00536">
    <property type="entry name" value="hemK_fam"/>
    <property type="match status" value="1"/>
</dbReference>
<dbReference type="NCBIfam" id="TIGR03533">
    <property type="entry name" value="L3_gln_methyl"/>
    <property type="match status" value="1"/>
</dbReference>
<dbReference type="PANTHER" id="PTHR47806">
    <property type="entry name" value="50S RIBOSOMAL PROTEIN L3 GLUTAMINE METHYLTRANSFERASE"/>
    <property type="match status" value="1"/>
</dbReference>
<dbReference type="PANTHER" id="PTHR47806:SF1">
    <property type="entry name" value="RIBOSOMAL PROTEIN UL3 GLUTAMINE METHYLTRANSFERASE"/>
    <property type="match status" value="1"/>
</dbReference>
<dbReference type="Pfam" id="PF05175">
    <property type="entry name" value="MTS"/>
    <property type="match status" value="1"/>
</dbReference>
<dbReference type="PIRSF" id="PIRSF037167">
    <property type="entry name" value="Mtase_YfcB_prd"/>
    <property type="match status" value="1"/>
</dbReference>
<dbReference type="SUPFAM" id="SSF53335">
    <property type="entry name" value="S-adenosyl-L-methionine-dependent methyltransferases"/>
    <property type="match status" value="1"/>
</dbReference>
<reference key="1">
    <citation type="journal article" date="1995" name="Science">
        <title>Whole-genome random sequencing and assembly of Haemophilus influenzae Rd.</title>
        <authorList>
            <person name="Fleischmann R.D."/>
            <person name="Adams M.D."/>
            <person name="White O."/>
            <person name="Clayton R.A."/>
            <person name="Kirkness E.F."/>
            <person name="Kerlavage A.R."/>
            <person name="Bult C.J."/>
            <person name="Tomb J.-F."/>
            <person name="Dougherty B.A."/>
            <person name="Merrick J.M."/>
            <person name="McKenney K."/>
            <person name="Sutton G.G."/>
            <person name="FitzHugh W."/>
            <person name="Fields C.A."/>
            <person name="Gocayne J.D."/>
            <person name="Scott J.D."/>
            <person name="Shirley R."/>
            <person name="Liu L.-I."/>
            <person name="Glodek A."/>
            <person name="Kelley J.M."/>
            <person name="Weidman J.F."/>
            <person name="Phillips C.A."/>
            <person name="Spriggs T."/>
            <person name="Hedblom E."/>
            <person name="Cotton M.D."/>
            <person name="Utterback T.R."/>
            <person name="Hanna M.C."/>
            <person name="Nguyen D.T."/>
            <person name="Saudek D.M."/>
            <person name="Brandon R.C."/>
            <person name="Fine L.D."/>
            <person name="Fritchman J.L."/>
            <person name="Fuhrmann J.L."/>
            <person name="Geoghagen N.S.M."/>
            <person name="Gnehm C.L."/>
            <person name="McDonald L.A."/>
            <person name="Small K.V."/>
            <person name="Fraser C.M."/>
            <person name="Smith H.O."/>
            <person name="Venter J.C."/>
        </authorList>
    </citation>
    <scope>NUCLEOTIDE SEQUENCE [LARGE SCALE GENOMIC DNA]</scope>
    <source>
        <strain>ATCC 51907 / DSM 11121 / KW20 / Rd</strain>
    </source>
</reference>
<proteinExistence type="inferred from homology"/>
<feature type="chain" id="PRO_0000088006" description="Ribosomal protein uL3 glutamine methyltransferase">
    <location>
        <begin position="1"/>
        <end position="314"/>
    </location>
</feature>
<evidence type="ECO:0000255" key="1">
    <source>
        <dbReference type="HAMAP-Rule" id="MF_02125"/>
    </source>
</evidence>
<keyword id="KW-0489">Methyltransferase</keyword>
<keyword id="KW-1185">Reference proteome</keyword>
<keyword id="KW-0949">S-adenosyl-L-methionine</keyword>
<keyword id="KW-0808">Transferase</keyword>
<protein>
    <recommendedName>
        <fullName evidence="1">Ribosomal protein uL3 glutamine methyltransferase</fullName>
        <shortName evidence="1">uL3 MTase</shortName>
        <ecNumber evidence="1">2.1.1.298</ecNumber>
    </recommendedName>
    <alternativeName>
        <fullName evidence="1">N5-glutamine methyltransferase PrmB</fullName>
    </alternativeName>
</protein>
<name>PRMB_HAEIN</name>
<gene>
    <name evidence="1" type="primary">prmB</name>
    <name type="ordered locus">HI_1201</name>
</gene>
<sequence length="314" mass="35590">METSHNQELVATILEDNVANELQTIQDFLRWTYSILNRSDIYFGQGHDNPWDESLQLVLSSLHLPIDLPTELFNSRLTPSEKETLVQLVLTRIEQRVPVAYLTNSAWFCGHEFYVDERTIIPRSPISALIQDRFEDLISQEPNHILDLCTGSGCIAIACAYAFPNAEVDAVDLSVDALNVAEINISRHQLEHRVFPIQSNLFENILGQKYDLIVTNPPYVDEEDLADMPEEFHFEPELALGSGSDGLNITKQILKQAPDYLTENGVLVCEVGNSMISLIEQYPDVPFEWVELKNGGLGVFAIQRKDLVKYHDLF</sequence>
<comment type="function">
    <text evidence="1">Methylates large ribosomal subunit protein uL3 on a specific glutamine residue.</text>
</comment>
<comment type="catalytic activity">
    <reaction evidence="1">
        <text>L-glutaminyl-[ribosomal protein uL3] + S-adenosyl-L-methionine = N(5)-methyl-L-glutaminyl-[ribosomal protein uL3] + S-adenosyl-L-homocysteine + H(+)</text>
        <dbReference type="Rhea" id="RHEA:45020"/>
        <dbReference type="Rhea" id="RHEA-COMP:11063"/>
        <dbReference type="Rhea" id="RHEA-COMP:11064"/>
        <dbReference type="ChEBI" id="CHEBI:15378"/>
        <dbReference type="ChEBI" id="CHEBI:30011"/>
        <dbReference type="ChEBI" id="CHEBI:57856"/>
        <dbReference type="ChEBI" id="CHEBI:59789"/>
        <dbReference type="ChEBI" id="CHEBI:61891"/>
        <dbReference type="EC" id="2.1.1.298"/>
    </reaction>
</comment>
<comment type="similarity">
    <text evidence="1">Belongs to the protein N5-glutamine methyltransferase family. PrmB subfamily.</text>
</comment>